<feature type="chain" id="PRO_1000020553" description="Threonine--tRNA ligase">
    <location>
        <begin position="1"/>
        <end position="636"/>
    </location>
</feature>
<feature type="domain" description="TGS" evidence="2">
    <location>
        <begin position="1"/>
        <end position="63"/>
    </location>
</feature>
<feature type="region of interest" description="Catalytic" evidence="1">
    <location>
        <begin position="245"/>
        <end position="536"/>
    </location>
</feature>
<feature type="binding site" evidence="1">
    <location>
        <position position="336"/>
    </location>
    <ligand>
        <name>Zn(2+)</name>
        <dbReference type="ChEBI" id="CHEBI:29105"/>
    </ligand>
</feature>
<feature type="binding site" evidence="1">
    <location>
        <position position="387"/>
    </location>
    <ligand>
        <name>Zn(2+)</name>
        <dbReference type="ChEBI" id="CHEBI:29105"/>
    </ligand>
</feature>
<feature type="binding site" evidence="1">
    <location>
        <position position="513"/>
    </location>
    <ligand>
        <name>Zn(2+)</name>
        <dbReference type="ChEBI" id="CHEBI:29105"/>
    </ligand>
</feature>
<evidence type="ECO:0000255" key="1">
    <source>
        <dbReference type="HAMAP-Rule" id="MF_00184"/>
    </source>
</evidence>
<evidence type="ECO:0000255" key="2">
    <source>
        <dbReference type="PROSITE-ProRule" id="PRU01228"/>
    </source>
</evidence>
<comment type="function">
    <text evidence="1">Catalyzes the attachment of threonine to tRNA(Thr) in a two-step reaction: L-threonine is first activated by ATP to form Thr-AMP and then transferred to the acceptor end of tRNA(Thr). Also edits incorrectly charged L-seryl-tRNA(Thr).</text>
</comment>
<comment type="catalytic activity">
    <reaction evidence="1">
        <text>tRNA(Thr) + L-threonine + ATP = L-threonyl-tRNA(Thr) + AMP + diphosphate + H(+)</text>
        <dbReference type="Rhea" id="RHEA:24624"/>
        <dbReference type="Rhea" id="RHEA-COMP:9670"/>
        <dbReference type="Rhea" id="RHEA-COMP:9704"/>
        <dbReference type="ChEBI" id="CHEBI:15378"/>
        <dbReference type="ChEBI" id="CHEBI:30616"/>
        <dbReference type="ChEBI" id="CHEBI:33019"/>
        <dbReference type="ChEBI" id="CHEBI:57926"/>
        <dbReference type="ChEBI" id="CHEBI:78442"/>
        <dbReference type="ChEBI" id="CHEBI:78534"/>
        <dbReference type="ChEBI" id="CHEBI:456215"/>
        <dbReference type="EC" id="6.1.1.3"/>
    </reaction>
</comment>
<comment type="cofactor">
    <cofactor evidence="1">
        <name>Zn(2+)</name>
        <dbReference type="ChEBI" id="CHEBI:29105"/>
    </cofactor>
    <text evidence="1">Binds 1 zinc ion per subunit.</text>
</comment>
<comment type="subunit">
    <text evidence="1">Homodimer.</text>
</comment>
<comment type="subcellular location">
    <subcellularLocation>
        <location evidence="1">Cytoplasm</location>
    </subcellularLocation>
</comment>
<comment type="similarity">
    <text evidence="1">Belongs to the class-II aminoacyl-tRNA synthetase family.</text>
</comment>
<dbReference type="EC" id="6.1.1.3" evidence="1"/>
<dbReference type="EMBL" id="CP000050">
    <property type="protein sequence ID" value="AAY48716.1"/>
    <property type="molecule type" value="Genomic_DNA"/>
</dbReference>
<dbReference type="SMR" id="Q4UW57"/>
<dbReference type="KEGG" id="xcb:XC_1650"/>
<dbReference type="HOGENOM" id="CLU_008554_0_1_6"/>
<dbReference type="Proteomes" id="UP000000420">
    <property type="component" value="Chromosome"/>
</dbReference>
<dbReference type="GO" id="GO:0005829">
    <property type="term" value="C:cytosol"/>
    <property type="evidence" value="ECO:0007669"/>
    <property type="project" value="TreeGrafter"/>
</dbReference>
<dbReference type="GO" id="GO:0005524">
    <property type="term" value="F:ATP binding"/>
    <property type="evidence" value="ECO:0007669"/>
    <property type="project" value="UniProtKB-UniRule"/>
</dbReference>
<dbReference type="GO" id="GO:0046872">
    <property type="term" value="F:metal ion binding"/>
    <property type="evidence" value="ECO:0007669"/>
    <property type="project" value="UniProtKB-KW"/>
</dbReference>
<dbReference type="GO" id="GO:0004829">
    <property type="term" value="F:threonine-tRNA ligase activity"/>
    <property type="evidence" value="ECO:0007669"/>
    <property type="project" value="UniProtKB-UniRule"/>
</dbReference>
<dbReference type="GO" id="GO:0000049">
    <property type="term" value="F:tRNA binding"/>
    <property type="evidence" value="ECO:0007669"/>
    <property type="project" value="UniProtKB-KW"/>
</dbReference>
<dbReference type="GO" id="GO:0006435">
    <property type="term" value="P:threonyl-tRNA aminoacylation"/>
    <property type="evidence" value="ECO:0007669"/>
    <property type="project" value="UniProtKB-UniRule"/>
</dbReference>
<dbReference type="CDD" id="cd01667">
    <property type="entry name" value="TGS_ThrRS"/>
    <property type="match status" value="1"/>
</dbReference>
<dbReference type="CDD" id="cd00860">
    <property type="entry name" value="ThrRS_anticodon"/>
    <property type="match status" value="1"/>
</dbReference>
<dbReference type="CDD" id="cd00771">
    <property type="entry name" value="ThrRS_core"/>
    <property type="match status" value="1"/>
</dbReference>
<dbReference type="FunFam" id="3.10.20.30:FF:000005">
    <property type="entry name" value="Threonine--tRNA ligase"/>
    <property type="match status" value="1"/>
</dbReference>
<dbReference type="FunFam" id="3.30.54.20:FF:000002">
    <property type="entry name" value="Threonine--tRNA ligase"/>
    <property type="match status" value="1"/>
</dbReference>
<dbReference type="FunFam" id="3.30.930.10:FF:000002">
    <property type="entry name" value="Threonine--tRNA ligase"/>
    <property type="match status" value="1"/>
</dbReference>
<dbReference type="FunFam" id="3.40.50.800:FF:000001">
    <property type="entry name" value="Threonine--tRNA ligase"/>
    <property type="match status" value="1"/>
</dbReference>
<dbReference type="FunFam" id="3.30.980.10:FF:000005">
    <property type="entry name" value="Threonyl-tRNA synthetase, mitochondrial"/>
    <property type="match status" value="1"/>
</dbReference>
<dbReference type="Gene3D" id="3.10.20.30">
    <property type="match status" value="1"/>
</dbReference>
<dbReference type="Gene3D" id="3.30.54.20">
    <property type="match status" value="1"/>
</dbReference>
<dbReference type="Gene3D" id="3.40.50.800">
    <property type="entry name" value="Anticodon-binding domain"/>
    <property type="match status" value="1"/>
</dbReference>
<dbReference type="Gene3D" id="3.30.930.10">
    <property type="entry name" value="Bira Bifunctional Protein, Domain 2"/>
    <property type="match status" value="1"/>
</dbReference>
<dbReference type="Gene3D" id="3.30.980.10">
    <property type="entry name" value="Threonyl-trna Synthetase, Chain A, domain 2"/>
    <property type="match status" value="1"/>
</dbReference>
<dbReference type="HAMAP" id="MF_00184">
    <property type="entry name" value="Thr_tRNA_synth"/>
    <property type="match status" value="1"/>
</dbReference>
<dbReference type="InterPro" id="IPR002314">
    <property type="entry name" value="aa-tRNA-synt_IIb"/>
</dbReference>
<dbReference type="InterPro" id="IPR006195">
    <property type="entry name" value="aa-tRNA-synth_II"/>
</dbReference>
<dbReference type="InterPro" id="IPR045864">
    <property type="entry name" value="aa-tRNA-synth_II/BPL/LPL"/>
</dbReference>
<dbReference type="InterPro" id="IPR004154">
    <property type="entry name" value="Anticodon-bd"/>
</dbReference>
<dbReference type="InterPro" id="IPR036621">
    <property type="entry name" value="Anticodon-bd_dom_sf"/>
</dbReference>
<dbReference type="InterPro" id="IPR012675">
    <property type="entry name" value="Beta-grasp_dom_sf"/>
</dbReference>
<dbReference type="InterPro" id="IPR004095">
    <property type="entry name" value="TGS"/>
</dbReference>
<dbReference type="InterPro" id="IPR012676">
    <property type="entry name" value="TGS-like"/>
</dbReference>
<dbReference type="InterPro" id="IPR002320">
    <property type="entry name" value="Thr-tRNA-ligase_IIa"/>
</dbReference>
<dbReference type="InterPro" id="IPR018163">
    <property type="entry name" value="Thr/Ala-tRNA-synth_IIc_edit"/>
</dbReference>
<dbReference type="InterPro" id="IPR047246">
    <property type="entry name" value="ThrRS_anticodon"/>
</dbReference>
<dbReference type="InterPro" id="IPR033728">
    <property type="entry name" value="ThrRS_core"/>
</dbReference>
<dbReference type="InterPro" id="IPR012947">
    <property type="entry name" value="tRNA_SAD"/>
</dbReference>
<dbReference type="NCBIfam" id="TIGR00418">
    <property type="entry name" value="thrS"/>
    <property type="match status" value="1"/>
</dbReference>
<dbReference type="PANTHER" id="PTHR11451:SF44">
    <property type="entry name" value="THREONINE--TRNA LIGASE, CHLOROPLASTIC_MITOCHONDRIAL 2"/>
    <property type="match status" value="1"/>
</dbReference>
<dbReference type="PANTHER" id="PTHR11451">
    <property type="entry name" value="THREONINE-TRNA LIGASE"/>
    <property type="match status" value="1"/>
</dbReference>
<dbReference type="Pfam" id="PF03129">
    <property type="entry name" value="HGTP_anticodon"/>
    <property type="match status" value="1"/>
</dbReference>
<dbReference type="Pfam" id="PF02824">
    <property type="entry name" value="TGS"/>
    <property type="match status" value="1"/>
</dbReference>
<dbReference type="Pfam" id="PF00587">
    <property type="entry name" value="tRNA-synt_2b"/>
    <property type="match status" value="1"/>
</dbReference>
<dbReference type="Pfam" id="PF07973">
    <property type="entry name" value="tRNA_SAD"/>
    <property type="match status" value="1"/>
</dbReference>
<dbReference type="PRINTS" id="PR01047">
    <property type="entry name" value="TRNASYNTHTHR"/>
</dbReference>
<dbReference type="SMART" id="SM00863">
    <property type="entry name" value="tRNA_SAD"/>
    <property type="match status" value="1"/>
</dbReference>
<dbReference type="SUPFAM" id="SSF52954">
    <property type="entry name" value="Class II aaRS ABD-related"/>
    <property type="match status" value="1"/>
</dbReference>
<dbReference type="SUPFAM" id="SSF55681">
    <property type="entry name" value="Class II aaRS and biotin synthetases"/>
    <property type="match status" value="1"/>
</dbReference>
<dbReference type="SUPFAM" id="SSF81271">
    <property type="entry name" value="TGS-like"/>
    <property type="match status" value="1"/>
</dbReference>
<dbReference type="SUPFAM" id="SSF55186">
    <property type="entry name" value="ThrRS/AlaRS common domain"/>
    <property type="match status" value="1"/>
</dbReference>
<dbReference type="PROSITE" id="PS50862">
    <property type="entry name" value="AA_TRNA_LIGASE_II"/>
    <property type="match status" value="1"/>
</dbReference>
<dbReference type="PROSITE" id="PS51880">
    <property type="entry name" value="TGS"/>
    <property type="match status" value="1"/>
</dbReference>
<proteinExistence type="inferred from homology"/>
<reference key="1">
    <citation type="journal article" date="2005" name="Genome Res.">
        <title>Comparative and functional genomic analyses of the pathogenicity of phytopathogen Xanthomonas campestris pv. campestris.</title>
        <authorList>
            <person name="Qian W."/>
            <person name="Jia Y."/>
            <person name="Ren S.-X."/>
            <person name="He Y.-Q."/>
            <person name="Feng J.-X."/>
            <person name="Lu L.-F."/>
            <person name="Sun Q."/>
            <person name="Ying G."/>
            <person name="Tang D.-J."/>
            <person name="Tang H."/>
            <person name="Wu W."/>
            <person name="Hao P."/>
            <person name="Wang L."/>
            <person name="Jiang B.-L."/>
            <person name="Zeng S."/>
            <person name="Gu W.-Y."/>
            <person name="Lu G."/>
            <person name="Rong L."/>
            <person name="Tian Y."/>
            <person name="Yao Z."/>
            <person name="Fu G."/>
            <person name="Chen B."/>
            <person name="Fang R."/>
            <person name="Qiang B."/>
            <person name="Chen Z."/>
            <person name="Zhao G.-P."/>
            <person name="Tang J.-L."/>
            <person name="He C."/>
        </authorList>
    </citation>
    <scope>NUCLEOTIDE SEQUENCE [LARGE SCALE GENOMIC DNA]</scope>
    <source>
        <strain>8004</strain>
    </source>
</reference>
<accession>Q4UW57</accession>
<gene>
    <name evidence="1" type="primary">thrS</name>
    <name type="ordered locus">XC_1650</name>
</gene>
<name>SYT_XANC8</name>
<sequence length="636" mass="72002">MPMITITLPDGSRREFDAPVSVMQVAQSIGAGLAKATIAGQVDGQLVDASDLIEHDASLRIITAKDAEGVEIIRHSCAHLVGHAVKQLYPDVKMVIGPVIAEGFYYDIYSERPFTPEDMAAIEQRMQQLIAQDYDVIKKVTPRAEVIEVFAQRGEEYKLRLIEDMSDDITAMGLYYHQEYVDMCRGPHVPNTRFLKAFKLTRISGAYWRGDAKNEQLQRIYGTAWADKKQLDAYILRMEEADKRDHRKIGKAQDLFHLQEEAPGLVFWHPKGWSLWQVVEQYMRKVYRDSGYGEVRCPQILDVSLWQKSGHWDNYQDAMFFTESEKRTYAVKPMNCPGHVQVFNQGLHSYRDLPIRYGEFGACHRNEPSGALHGILRVRGFTQDDGHVFCLESQIEAEVTAFHQQALAVYTAFGFDDIQIKIALRPEKRLGDDATWDKAEAALRSALGVCGVEWQELPGEGAFYGPKIEYHLKDAIGRTWQLGTMQVDFMMPGRLGAEYVDEHSQKKHPVMLHRAIVGSMERFIGILIEHHAGAFPAWLAPVQVVVANITDAQAEYVDSVRKTLANQGFRVSADLRNEKIGYKIREHTLQRVPYLLVVGDREKENGAVAVRTRSGEDLGTMTVSAFIERLQAEQAA</sequence>
<protein>
    <recommendedName>
        <fullName evidence="1">Threonine--tRNA ligase</fullName>
        <ecNumber evidence="1">6.1.1.3</ecNumber>
    </recommendedName>
    <alternativeName>
        <fullName evidence="1">Threonyl-tRNA synthetase</fullName>
        <shortName evidence="1">ThrRS</shortName>
    </alternativeName>
</protein>
<organism>
    <name type="scientific">Xanthomonas campestris pv. campestris (strain 8004)</name>
    <dbReference type="NCBI Taxonomy" id="314565"/>
    <lineage>
        <taxon>Bacteria</taxon>
        <taxon>Pseudomonadati</taxon>
        <taxon>Pseudomonadota</taxon>
        <taxon>Gammaproteobacteria</taxon>
        <taxon>Lysobacterales</taxon>
        <taxon>Lysobacteraceae</taxon>
        <taxon>Xanthomonas</taxon>
    </lineage>
</organism>
<keyword id="KW-0030">Aminoacyl-tRNA synthetase</keyword>
<keyword id="KW-0067">ATP-binding</keyword>
<keyword id="KW-0963">Cytoplasm</keyword>
<keyword id="KW-0436">Ligase</keyword>
<keyword id="KW-0479">Metal-binding</keyword>
<keyword id="KW-0547">Nucleotide-binding</keyword>
<keyword id="KW-0648">Protein biosynthesis</keyword>
<keyword id="KW-0694">RNA-binding</keyword>
<keyword id="KW-0820">tRNA-binding</keyword>
<keyword id="KW-0862">Zinc</keyword>